<proteinExistence type="inferred from homology"/>
<name>RISB_CORK4</name>
<gene>
    <name evidence="1" type="primary">ribH</name>
    <name type="ordered locus">ckrop_0975</name>
</gene>
<dbReference type="EC" id="2.5.1.78" evidence="1"/>
<dbReference type="EMBL" id="CP001620">
    <property type="protein sequence ID" value="ACR17728.1"/>
    <property type="molecule type" value="Genomic_DNA"/>
</dbReference>
<dbReference type="RefSeq" id="WP_012731615.1">
    <property type="nucleotide sequence ID" value="NC_012704.1"/>
</dbReference>
<dbReference type="SMR" id="C4LIS3"/>
<dbReference type="STRING" id="645127.ckrop_0975"/>
<dbReference type="KEGG" id="ckp:ckrop_0975"/>
<dbReference type="eggNOG" id="COG0054">
    <property type="taxonomic scope" value="Bacteria"/>
</dbReference>
<dbReference type="HOGENOM" id="CLU_089358_1_2_11"/>
<dbReference type="OrthoDB" id="9809709at2"/>
<dbReference type="UniPathway" id="UPA00275">
    <property type="reaction ID" value="UER00404"/>
</dbReference>
<dbReference type="Proteomes" id="UP000001473">
    <property type="component" value="Chromosome"/>
</dbReference>
<dbReference type="GO" id="GO:0005829">
    <property type="term" value="C:cytosol"/>
    <property type="evidence" value="ECO:0007669"/>
    <property type="project" value="TreeGrafter"/>
</dbReference>
<dbReference type="GO" id="GO:0009349">
    <property type="term" value="C:riboflavin synthase complex"/>
    <property type="evidence" value="ECO:0007669"/>
    <property type="project" value="InterPro"/>
</dbReference>
<dbReference type="GO" id="GO:0000906">
    <property type="term" value="F:6,7-dimethyl-8-ribityllumazine synthase activity"/>
    <property type="evidence" value="ECO:0007669"/>
    <property type="project" value="UniProtKB-UniRule"/>
</dbReference>
<dbReference type="GO" id="GO:0009231">
    <property type="term" value="P:riboflavin biosynthetic process"/>
    <property type="evidence" value="ECO:0007669"/>
    <property type="project" value="UniProtKB-UniRule"/>
</dbReference>
<dbReference type="CDD" id="cd09209">
    <property type="entry name" value="Lumazine_synthase-I"/>
    <property type="match status" value="1"/>
</dbReference>
<dbReference type="Gene3D" id="3.40.50.960">
    <property type="entry name" value="Lumazine/riboflavin synthase"/>
    <property type="match status" value="1"/>
</dbReference>
<dbReference type="HAMAP" id="MF_00178">
    <property type="entry name" value="Lumazine_synth"/>
    <property type="match status" value="1"/>
</dbReference>
<dbReference type="InterPro" id="IPR034964">
    <property type="entry name" value="LS"/>
</dbReference>
<dbReference type="InterPro" id="IPR002180">
    <property type="entry name" value="LS/RS"/>
</dbReference>
<dbReference type="InterPro" id="IPR036467">
    <property type="entry name" value="LS/RS_sf"/>
</dbReference>
<dbReference type="NCBIfam" id="TIGR00114">
    <property type="entry name" value="lumazine-synth"/>
    <property type="match status" value="1"/>
</dbReference>
<dbReference type="PANTHER" id="PTHR21058:SF0">
    <property type="entry name" value="6,7-DIMETHYL-8-RIBITYLLUMAZINE SYNTHASE"/>
    <property type="match status" value="1"/>
</dbReference>
<dbReference type="PANTHER" id="PTHR21058">
    <property type="entry name" value="6,7-DIMETHYL-8-RIBITYLLUMAZINE SYNTHASE DMRL SYNTHASE LUMAZINE SYNTHASE"/>
    <property type="match status" value="1"/>
</dbReference>
<dbReference type="Pfam" id="PF00885">
    <property type="entry name" value="DMRL_synthase"/>
    <property type="match status" value="1"/>
</dbReference>
<dbReference type="SUPFAM" id="SSF52121">
    <property type="entry name" value="Lumazine synthase"/>
    <property type="match status" value="1"/>
</dbReference>
<feature type="chain" id="PRO_1000203784" description="6,7-dimethyl-8-ribityllumazine synthase">
    <location>
        <begin position="1"/>
        <end position="159"/>
    </location>
</feature>
<feature type="active site" description="Proton donor" evidence="1">
    <location>
        <position position="89"/>
    </location>
</feature>
<feature type="binding site" evidence="1">
    <location>
        <position position="28"/>
    </location>
    <ligand>
        <name>5-amino-6-(D-ribitylamino)uracil</name>
        <dbReference type="ChEBI" id="CHEBI:15934"/>
    </ligand>
</feature>
<feature type="binding site" evidence="1">
    <location>
        <begin position="59"/>
        <end position="61"/>
    </location>
    <ligand>
        <name>5-amino-6-(D-ribitylamino)uracil</name>
        <dbReference type="ChEBI" id="CHEBI:15934"/>
    </ligand>
</feature>
<feature type="binding site" evidence="1">
    <location>
        <begin position="81"/>
        <end position="83"/>
    </location>
    <ligand>
        <name>5-amino-6-(D-ribitylamino)uracil</name>
        <dbReference type="ChEBI" id="CHEBI:15934"/>
    </ligand>
</feature>
<feature type="binding site" evidence="1">
    <location>
        <begin position="86"/>
        <end position="87"/>
    </location>
    <ligand>
        <name>(2S)-2-hydroxy-3-oxobutyl phosphate</name>
        <dbReference type="ChEBI" id="CHEBI:58830"/>
    </ligand>
</feature>
<feature type="binding site" evidence="1">
    <location>
        <position position="114"/>
    </location>
    <ligand>
        <name>5-amino-6-(D-ribitylamino)uracil</name>
        <dbReference type="ChEBI" id="CHEBI:15934"/>
    </ligand>
</feature>
<feature type="binding site" evidence="1">
    <location>
        <position position="128"/>
    </location>
    <ligand>
        <name>(2S)-2-hydroxy-3-oxobutyl phosphate</name>
        <dbReference type="ChEBI" id="CHEBI:58830"/>
    </ligand>
</feature>
<comment type="function">
    <text evidence="1">Catalyzes the formation of 6,7-dimethyl-8-ribityllumazine by condensation of 5-amino-6-(D-ribitylamino)uracil with 3,4-dihydroxy-2-butanone 4-phosphate. This is the penultimate step in the biosynthesis of riboflavin.</text>
</comment>
<comment type="catalytic activity">
    <reaction evidence="1">
        <text>(2S)-2-hydroxy-3-oxobutyl phosphate + 5-amino-6-(D-ribitylamino)uracil = 6,7-dimethyl-8-(1-D-ribityl)lumazine + phosphate + 2 H2O + H(+)</text>
        <dbReference type="Rhea" id="RHEA:26152"/>
        <dbReference type="ChEBI" id="CHEBI:15377"/>
        <dbReference type="ChEBI" id="CHEBI:15378"/>
        <dbReference type="ChEBI" id="CHEBI:15934"/>
        <dbReference type="ChEBI" id="CHEBI:43474"/>
        <dbReference type="ChEBI" id="CHEBI:58201"/>
        <dbReference type="ChEBI" id="CHEBI:58830"/>
        <dbReference type="EC" id="2.5.1.78"/>
    </reaction>
</comment>
<comment type="pathway">
    <text evidence="1">Cofactor biosynthesis; riboflavin biosynthesis; riboflavin from 2-hydroxy-3-oxobutyl phosphate and 5-amino-6-(D-ribitylamino)uracil: step 1/2.</text>
</comment>
<comment type="similarity">
    <text evidence="1">Belongs to the DMRL synthase family.</text>
</comment>
<reference key="1">
    <citation type="journal article" date="2008" name="J. Biotechnol.">
        <title>Ultrafast pyrosequencing of Corynebacterium kroppenstedtii DSM44385 revealed insights into the physiology of a lipophilic corynebacterium that lacks mycolic acids.</title>
        <authorList>
            <person name="Tauch A."/>
            <person name="Schneider J."/>
            <person name="Szczepanowski R."/>
            <person name="Tilker A."/>
            <person name="Viehoever P."/>
            <person name="Gartemann K.-H."/>
            <person name="Arnold W."/>
            <person name="Blom J."/>
            <person name="Brinkrolf K."/>
            <person name="Brune I."/>
            <person name="Goetker S."/>
            <person name="Weisshaar B."/>
            <person name="Goesmann A."/>
            <person name="Droege M."/>
            <person name="Puehler A."/>
        </authorList>
    </citation>
    <scope>NUCLEOTIDE SEQUENCE [LARGE SCALE GENOMIC DNA]</scope>
    <source>
        <strain>DSM 44385 / JCM 11950 / CIP 105744 / CCUG 35717</strain>
    </source>
</reference>
<evidence type="ECO:0000255" key="1">
    <source>
        <dbReference type="HAMAP-Rule" id="MF_00178"/>
    </source>
</evidence>
<keyword id="KW-1185">Reference proteome</keyword>
<keyword id="KW-0686">Riboflavin biosynthesis</keyword>
<keyword id="KW-0808">Transferase</keyword>
<accession>C4LIS3</accession>
<organism>
    <name type="scientific">Corynebacterium kroppenstedtii (strain DSM 44385 / JCM 11950 / CIP 105744 / CCUG 35717)</name>
    <dbReference type="NCBI Taxonomy" id="645127"/>
    <lineage>
        <taxon>Bacteria</taxon>
        <taxon>Bacillati</taxon>
        <taxon>Actinomycetota</taxon>
        <taxon>Actinomycetes</taxon>
        <taxon>Mycobacteriales</taxon>
        <taxon>Corynebacteriaceae</taxon>
        <taxon>Corynebacterium</taxon>
    </lineage>
</organism>
<protein>
    <recommendedName>
        <fullName evidence="1">6,7-dimethyl-8-ribityllumazine synthase</fullName>
        <shortName evidence="1">DMRL synthase</shortName>
        <shortName evidence="1">LS</shortName>
        <shortName evidence="1">Lumazine synthase</shortName>
        <ecNumber evidence="1">2.5.1.78</ecNumber>
    </recommendedName>
</protein>
<sequence length="159" mass="16296">MSGEGSPTITIEPGSAHGLRVAIVVSEWNRDITDELASQAQQAGETAGAEVTVIPVVGALEIPVVVKKATQTYDAVVALGCVIQGGTPHFDHVCNAVTYGLTKIAVETETPVGNGVLTCNTHEQAVDRAGGPTAHENKGAEAMIAAIHTAQTLKSMAAD</sequence>